<feature type="chain" id="PRO_1000008945" description="Phosphoadenosine 5'-phosphosulfate reductase">
    <location>
        <begin position="1"/>
        <end position="241"/>
    </location>
</feature>
<feature type="active site" description="Nucleophile; cysteine thiosulfonate intermediate" evidence="1">
    <location>
        <position position="235"/>
    </location>
</feature>
<organism>
    <name type="scientific">Xanthomonas campestris pv. campestris (strain 8004)</name>
    <dbReference type="NCBI Taxonomy" id="314565"/>
    <lineage>
        <taxon>Bacteria</taxon>
        <taxon>Pseudomonadati</taxon>
        <taxon>Pseudomonadota</taxon>
        <taxon>Gammaproteobacteria</taxon>
        <taxon>Lysobacterales</taxon>
        <taxon>Lysobacteraceae</taxon>
        <taxon>Xanthomonas</taxon>
    </lineage>
</organism>
<gene>
    <name evidence="1" type="primary">cysH</name>
    <name type="ordered locus">XC_0990</name>
</gene>
<comment type="function">
    <text evidence="1">Catalyzes the formation of sulfite from phosphoadenosine 5'-phosphosulfate (PAPS) using thioredoxin as an electron donor.</text>
</comment>
<comment type="catalytic activity">
    <reaction evidence="1">
        <text>[thioredoxin]-disulfide + sulfite + adenosine 3',5'-bisphosphate + 2 H(+) = [thioredoxin]-dithiol + 3'-phosphoadenylyl sulfate</text>
        <dbReference type="Rhea" id="RHEA:11724"/>
        <dbReference type="Rhea" id="RHEA-COMP:10698"/>
        <dbReference type="Rhea" id="RHEA-COMP:10700"/>
        <dbReference type="ChEBI" id="CHEBI:15378"/>
        <dbReference type="ChEBI" id="CHEBI:17359"/>
        <dbReference type="ChEBI" id="CHEBI:29950"/>
        <dbReference type="ChEBI" id="CHEBI:50058"/>
        <dbReference type="ChEBI" id="CHEBI:58339"/>
        <dbReference type="ChEBI" id="CHEBI:58343"/>
        <dbReference type="EC" id="1.8.4.8"/>
    </reaction>
</comment>
<comment type="pathway">
    <text evidence="1">Sulfur metabolism; hydrogen sulfide biosynthesis; sulfite from sulfate: step 3/3.</text>
</comment>
<comment type="subcellular location">
    <subcellularLocation>
        <location evidence="1">Cytoplasm</location>
    </subcellularLocation>
</comment>
<comment type="similarity">
    <text evidence="1">Belongs to the PAPS reductase family. CysH subfamily.</text>
</comment>
<dbReference type="EC" id="1.8.4.8" evidence="1"/>
<dbReference type="EMBL" id="CP000050">
    <property type="protein sequence ID" value="AAY48064.1"/>
    <property type="molecule type" value="Genomic_DNA"/>
</dbReference>
<dbReference type="RefSeq" id="WP_011038282.1">
    <property type="nucleotide sequence ID" value="NZ_CP155948.1"/>
</dbReference>
<dbReference type="SMR" id="Q4UY09"/>
<dbReference type="KEGG" id="xcb:XC_0990"/>
<dbReference type="HOGENOM" id="CLU_044089_3_0_6"/>
<dbReference type="UniPathway" id="UPA00140">
    <property type="reaction ID" value="UER00206"/>
</dbReference>
<dbReference type="Proteomes" id="UP000000420">
    <property type="component" value="Chromosome"/>
</dbReference>
<dbReference type="GO" id="GO:0005737">
    <property type="term" value="C:cytoplasm"/>
    <property type="evidence" value="ECO:0007669"/>
    <property type="project" value="UniProtKB-SubCell"/>
</dbReference>
<dbReference type="GO" id="GO:0004604">
    <property type="term" value="F:phosphoadenylyl-sulfate reductase (thioredoxin) activity"/>
    <property type="evidence" value="ECO:0007669"/>
    <property type="project" value="UniProtKB-UniRule"/>
</dbReference>
<dbReference type="GO" id="GO:0070814">
    <property type="term" value="P:hydrogen sulfide biosynthetic process"/>
    <property type="evidence" value="ECO:0007669"/>
    <property type="project" value="UniProtKB-UniRule"/>
</dbReference>
<dbReference type="GO" id="GO:0019379">
    <property type="term" value="P:sulfate assimilation, phosphoadenylyl sulfate reduction by phosphoadenylyl-sulfate reductase (thioredoxin)"/>
    <property type="evidence" value="ECO:0007669"/>
    <property type="project" value="UniProtKB-UniRule"/>
</dbReference>
<dbReference type="CDD" id="cd23945">
    <property type="entry name" value="PAPS_reductase"/>
    <property type="match status" value="1"/>
</dbReference>
<dbReference type="FunFam" id="3.40.50.620:FF:000043">
    <property type="entry name" value="Phosphoadenosine phosphosulfate reductase"/>
    <property type="match status" value="1"/>
</dbReference>
<dbReference type="Gene3D" id="3.40.50.620">
    <property type="entry name" value="HUPs"/>
    <property type="match status" value="1"/>
</dbReference>
<dbReference type="HAMAP" id="MF_00063">
    <property type="entry name" value="CysH"/>
    <property type="match status" value="1"/>
</dbReference>
<dbReference type="InterPro" id="IPR004511">
    <property type="entry name" value="PAPS/APS_Rdtase"/>
</dbReference>
<dbReference type="InterPro" id="IPR002500">
    <property type="entry name" value="PAPS_reduct_dom"/>
</dbReference>
<dbReference type="InterPro" id="IPR011800">
    <property type="entry name" value="PAPS_reductase_CysH"/>
</dbReference>
<dbReference type="InterPro" id="IPR014729">
    <property type="entry name" value="Rossmann-like_a/b/a_fold"/>
</dbReference>
<dbReference type="NCBIfam" id="TIGR00434">
    <property type="entry name" value="cysH"/>
    <property type="match status" value="1"/>
</dbReference>
<dbReference type="NCBIfam" id="TIGR02057">
    <property type="entry name" value="PAPS_reductase"/>
    <property type="match status" value="1"/>
</dbReference>
<dbReference type="NCBIfam" id="NF002537">
    <property type="entry name" value="PRK02090.1"/>
    <property type="match status" value="1"/>
</dbReference>
<dbReference type="PANTHER" id="PTHR46509">
    <property type="entry name" value="PHOSPHOADENOSINE PHOSPHOSULFATE REDUCTASE"/>
    <property type="match status" value="1"/>
</dbReference>
<dbReference type="PANTHER" id="PTHR46509:SF1">
    <property type="entry name" value="PHOSPHOADENOSINE PHOSPHOSULFATE REDUCTASE"/>
    <property type="match status" value="1"/>
</dbReference>
<dbReference type="Pfam" id="PF01507">
    <property type="entry name" value="PAPS_reduct"/>
    <property type="match status" value="1"/>
</dbReference>
<dbReference type="PIRSF" id="PIRSF000857">
    <property type="entry name" value="PAPS_reductase"/>
    <property type="match status" value="1"/>
</dbReference>
<dbReference type="SUPFAM" id="SSF52402">
    <property type="entry name" value="Adenine nucleotide alpha hydrolases-like"/>
    <property type="match status" value="1"/>
</dbReference>
<sequence length="241" mass="27637">MTALPATSIAAPSLDDLDALNAHLETLRADERVAWALQHGPQQAALSSSFGAQSAVTLHLLTQQRPDIPVILIDTGYLFPETYRFADALTERLSLNLQVYRPLVSRAWMEARHGRLWEQGMVGIDQYNNLRKVEPMRRALDELNVGTWFTGLRRSQSGGRAQTPIVQKRGDRYKISPIADWTDRDVWQYLQAHALPYHPLWEQGYVSIGDFHTTRRWEPGMREEDTRFFGLKRECGIHEDI</sequence>
<protein>
    <recommendedName>
        <fullName evidence="1">Phosphoadenosine 5'-phosphosulfate reductase</fullName>
        <shortName evidence="1">PAPS reductase</shortName>
        <ecNumber evidence="1">1.8.4.8</ecNumber>
    </recommendedName>
    <alternativeName>
        <fullName evidence="1">3'-phosphoadenylylsulfate reductase</fullName>
    </alternativeName>
    <alternativeName>
        <fullName evidence="1">PAPS reductase, thioredoxin dependent</fullName>
    </alternativeName>
    <alternativeName>
        <fullName evidence="1">PAPS sulfotransferase</fullName>
    </alternativeName>
    <alternativeName>
        <fullName evidence="1">PAdoPS reductase</fullName>
    </alternativeName>
</protein>
<proteinExistence type="inferred from homology"/>
<keyword id="KW-0963">Cytoplasm</keyword>
<keyword id="KW-0560">Oxidoreductase</keyword>
<accession>Q4UY09</accession>
<evidence type="ECO:0000255" key="1">
    <source>
        <dbReference type="HAMAP-Rule" id="MF_00063"/>
    </source>
</evidence>
<name>CYSH_XANC8</name>
<reference key="1">
    <citation type="journal article" date="2005" name="Genome Res.">
        <title>Comparative and functional genomic analyses of the pathogenicity of phytopathogen Xanthomonas campestris pv. campestris.</title>
        <authorList>
            <person name="Qian W."/>
            <person name="Jia Y."/>
            <person name="Ren S.-X."/>
            <person name="He Y.-Q."/>
            <person name="Feng J.-X."/>
            <person name="Lu L.-F."/>
            <person name="Sun Q."/>
            <person name="Ying G."/>
            <person name="Tang D.-J."/>
            <person name="Tang H."/>
            <person name="Wu W."/>
            <person name="Hao P."/>
            <person name="Wang L."/>
            <person name="Jiang B.-L."/>
            <person name="Zeng S."/>
            <person name="Gu W.-Y."/>
            <person name="Lu G."/>
            <person name="Rong L."/>
            <person name="Tian Y."/>
            <person name="Yao Z."/>
            <person name="Fu G."/>
            <person name="Chen B."/>
            <person name="Fang R."/>
            <person name="Qiang B."/>
            <person name="Chen Z."/>
            <person name="Zhao G.-P."/>
            <person name="Tang J.-L."/>
            <person name="He C."/>
        </authorList>
    </citation>
    <scope>NUCLEOTIDE SEQUENCE [LARGE SCALE GENOMIC DNA]</scope>
    <source>
        <strain>8004</strain>
    </source>
</reference>